<feature type="initiator methionine" description="Removed" evidence="1">
    <location>
        <position position="1"/>
    </location>
</feature>
<feature type="chain" id="PRO_0000089815" description="Anaphase-promoting complex subunit 16">
    <location>
        <begin position="2"/>
        <end position="110"/>
    </location>
</feature>
<feature type="region of interest" description="Disordered" evidence="2">
    <location>
        <begin position="1"/>
        <end position="29"/>
    </location>
</feature>
<feature type="compositionally biased region" description="Low complexity" evidence="2">
    <location>
        <begin position="1"/>
        <end position="26"/>
    </location>
</feature>
<feature type="modified residue" description="N-acetylalanine" evidence="1">
    <location>
        <position position="2"/>
    </location>
</feature>
<comment type="function">
    <text evidence="1">Component of the anaphase promoting complex/cyclosome (APC/C), a cell cycle-regulated E3 ubiquitin ligase that controls progression through mitosis and the G1 phase of the cell cycle. The APC/C complex acts by mediating ubiquitination and subsequent degradation of target proteins: it mainly mediates the formation of 'Lys-11'-linked polyubiquitin chains and, to a lower extent, the formation of 'Lys-48'- and 'Lys-63'-linked polyubiquitin chains. The APC/C complex catalyzes assembly of branched 'Lys-11'-/'Lys-48'-linked branched ubiquitin chains on target proteins.</text>
</comment>
<comment type="pathway">
    <text evidence="1">Protein modification; protein ubiquitination.</text>
</comment>
<comment type="subunit">
    <text evidence="1">The mammalian APC/C is composed at least of 14 distinct subunits ANAPC1, ANAPC2, CDC27/APC3, ANAPC4, ANAPC5, CDC16/APC6, ANAPC7, CDC23/APC8, ANAPC10, ANAPC11, CDC26/APC12, ANAPC13, ANAPC15 and ANAPC16 that assemble into a complex of at least 19 chains with a combined molecular mass of around 1.2 MDa; APC/C interacts with FZR1 and FBXO5. ANAPC16 associates with the rest of the complex independently of ANAPC2 and ANAPC11.</text>
</comment>
<comment type="subcellular location">
    <subcellularLocation>
        <location evidence="1">Cytoplasm</location>
    </subcellularLocation>
    <subcellularLocation>
        <location evidence="1">Nucleus</location>
    </subcellularLocation>
    <subcellularLocation>
        <location evidence="1">Chromosome</location>
        <location evidence="1">Centromere</location>
        <location evidence="1">Kinetochore</location>
    </subcellularLocation>
</comment>
<comment type="similarity">
    <text evidence="3">Belongs to the APC16 family.</text>
</comment>
<sequence length="110" mass="11637">MAASSSSSSAGGVSGSSVAGSGFSVSDLAPPRKALFTYPKGAGEMLEDGSERFLCESVFSYQVASTLKQVKHDQQVARMEKLAGLVEELEADEWRFKPIEQLLGFTPSSG</sequence>
<proteinExistence type="inferred from homology"/>
<dbReference type="EMBL" id="BT021537">
    <property type="protein sequence ID" value="AAX46384.1"/>
    <property type="molecule type" value="mRNA"/>
</dbReference>
<dbReference type="EMBL" id="BC114889">
    <property type="protein sequence ID" value="AAI14890.1"/>
    <property type="molecule type" value="mRNA"/>
</dbReference>
<dbReference type="RefSeq" id="NP_001014960.1">
    <property type="nucleotide sequence ID" value="NM_001014960.1"/>
</dbReference>
<dbReference type="RefSeq" id="XP_005226503.1">
    <property type="nucleotide sequence ID" value="XM_005226446.5"/>
</dbReference>
<dbReference type="RefSeq" id="XP_005226504.1">
    <property type="nucleotide sequence ID" value="XM_005226447.4"/>
</dbReference>
<dbReference type="RefSeq" id="XP_005226505.1">
    <property type="nucleotide sequence ID" value="XM_005226448.5"/>
</dbReference>
<dbReference type="SMR" id="Q58DR0"/>
<dbReference type="FunCoup" id="Q58DR0">
    <property type="interactions" value="1542"/>
</dbReference>
<dbReference type="STRING" id="9913.ENSBTAP00000000186"/>
<dbReference type="PaxDb" id="9913-ENSBTAP00000000186"/>
<dbReference type="Ensembl" id="ENSBTAT00000000186.4">
    <property type="protein sequence ID" value="ENSBTAP00000000186.3"/>
    <property type="gene ID" value="ENSBTAG00000000162.5"/>
</dbReference>
<dbReference type="GeneID" id="540089"/>
<dbReference type="KEGG" id="bta:540089"/>
<dbReference type="CTD" id="119504"/>
<dbReference type="VEuPathDB" id="HostDB:ENSBTAG00000000162"/>
<dbReference type="VGNC" id="VGNC:25883">
    <property type="gene designation" value="ANAPC16"/>
</dbReference>
<dbReference type="eggNOG" id="ENOG502RZ50">
    <property type="taxonomic scope" value="Eukaryota"/>
</dbReference>
<dbReference type="GeneTree" id="ENSGT00390000018109"/>
<dbReference type="HOGENOM" id="CLU_153312_0_0_1"/>
<dbReference type="InParanoid" id="Q58DR0"/>
<dbReference type="OMA" id="GASRRCH"/>
<dbReference type="OrthoDB" id="6374621at2759"/>
<dbReference type="TreeFam" id="TF332754"/>
<dbReference type="Reactome" id="R-BTA-141430">
    <property type="pathway name" value="Inactivation of APC/C via direct inhibition of the APC/C complex"/>
</dbReference>
<dbReference type="Reactome" id="R-BTA-174048">
    <property type="pathway name" value="APC/C:Cdc20 mediated degradation of Cyclin B"/>
</dbReference>
<dbReference type="Reactome" id="R-BTA-174084">
    <property type="pathway name" value="Autodegradation of Cdh1 by Cdh1:APC/C"/>
</dbReference>
<dbReference type="Reactome" id="R-BTA-174154">
    <property type="pathway name" value="APC/C:Cdc20 mediated degradation of Securin"/>
</dbReference>
<dbReference type="Reactome" id="R-BTA-174178">
    <property type="pathway name" value="APC/C:Cdh1 mediated degradation of Cdc20 and other APC/C:Cdh1 targeted proteins in late mitosis/early G1"/>
</dbReference>
<dbReference type="Reactome" id="R-BTA-174184">
    <property type="pathway name" value="Cdc20:Phospho-APC/C mediated degradation of Cyclin A"/>
</dbReference>
<dbReference type="Reactome" id="R-BTA-176407">
    <property type="pathway name" value="Conversion from APC/C:Cdc20 to APC/C:Cdh1 in late anaphase"/>
</dbReference>
<dbReference type="Reactome" id="R-BTA-176408">
    <property type="pathway name" value="Regulation of APC/C activators between G1/S and early anaphase"/>
</dbReference>
<dbReference type="Reactome" id="R-BTA-176409">
    <property type="pathway name" value="APC/C:Cdc20 mediated degradation of mitotic proteins"/>
</dbReference>
<dbReference type="Reactome" id="R-BTA-176412">
    <property type="pathway name" value="Phosphorylation of the APC/C"/>
</dbReference>
<dbReference type="Reactome" id="R-BTA-179409">
    <property type="pathway name" value="APC-Cdc20 mediated degradation of Nek2A"/>
</dbReference>
<dbReference type="Reactome" id="R-BTA-2467813">
    <property type="pathway name" value="Separation of Sister Chromatids"/>
</dbReference>
<dbReference type="Reactome" id="R-BTA-2559582">
    <property type="pathway name" value="Senescence-Associated Secretory Phenotype (SASP)"/>
</dbReference>
<dbReference type="Reactome" id="R-BTA-68867">
    <property type="pathway name" value="Assembly of the pre-replicative complex"/>
</dbReference>
<dbReference type="Reactome" id="R-BTA-69017">
    <property type="pathway name" value="CDK-mediated phosphorylation and removal of Cdc6"/>
</dbReference>
<dbReference type="UniPathway" id="UPA00143"/>
<dbReference type="Proteomes" id="UP000009136">
    <property type="component" value="Chromosome 28"/>
</dbReference>
<dbReference type="Bgee" id="ENSBTAG00000000162">
    <property type="expression patterns" value="Expressed in biceps femoris and 105 other cell types or tissues"/>
</dbReference>
<dbReference type="GO" id="GO:0005680">
    <property type="term" value="C:anaphase-promoting complex"/>
    <property type="evidence" value="ECO:0000250"/>
    <property type="project" value="UniProtKB"/>
</dbReference>
<dbReference type="GO" id="GO:0005829">
    <property type="term" value="C:cytosol"/>
    <property type="evidence" value="ECO:0000318"/>
    <property type="project" value="GO_Central"/>
</dbReference>
<dbReference type="GO" id="GO:0000776">
    <property type="term" value="C:kinetochore"/>
    <property type="evidence" value="ECO:0000250"/>
    <property type="project" value="UniProtKB"/>
</dbReference>
<dbReference type="GO" id="GO:0031145">
    <property type="term" value="P:anaphase-promoting complex-dependent catabolic process"/>
    <property type="evidence" value="ECO:0000250"/>
    <property type="project" value="UniProtKB"/>
</dbReference>
<dbReference type="GO" id="GO:0051301">
    <property type="term" value="P:cell division"/>
    <property type="evidence" value="ECO:0007669"/>
    <property type="project" value="UniProtKB-KW"/>
</dbReference>
<dbReference type="GO" id="GO:0141198">
    <property type="term" value="P:protein branched polyubiquitination"/>
    <property type="evidence" value="ECO:0000250"/>
    <property type="project" value="UniProtKB"/>
</dbReference>
<dbReference type="GO" id="GO:0070979">
    <property type="term" value="P:protein K11-linked ubiquitination"/>
    <property type="evidence" value="ECO:0000250"/>
    <property type="project" value="UniProtKB"/>
</dbReference>
<dbReference type="GO" id="GO:0070936">
    <property type="term" value="P:protein K48-linked ubiquitination"/>
    <property type="evidence" value="ECO:0000250"/>
    <property type="project" value="UniProtKB"/>
</dbReference>
<dbReference type="GO" id="GO:0016567">
    <property type="term" value="P:protein ubiquitination"/>
    <property type="evidence" value="ECO:0000250"/>
    <property type="project" value="UniProtKB"/>
</dbReference>
<dbReference type="InterPro" id="IPR029641">
    <property type="entry name" value="APC16"/>
</dbReference>
<dbReference type="PANTHER" id="PTHR31564">
    <property type="entry name" value="ANAPHASE-PROMOTING COMPLEX SUBUNIT 16"/>
    <property type="match status" value="1"/>
</dbReference>
<dbReference type="PANTHER" id="PTHR31564:SF0">
    <property type="entry name" value="ANAPHASE-PROMOTING COMPLEX SUBUNIT 16"/>
    <property type="match status" value="1"/>
</dbReference>
<dbReference type="Pfam" id="PF17256">
    <property type="entry name" value="ANAPC16"/>
    <property type="match status" value="1"/>
</dbReference>
<evidence type="ECO:0000250" key="1">
    <source>
        <dbReference type="UniProtKB" id="Q96DE5"/>
    </source>
</evidence>
<evidence type="ECO:0000256" key="2">
    <source>
        <dbReference type="SAM" id="MobiDB-lite"/>
    </source>
</evidence>
<evidence type="ECO:0000305" key="3"/>
<keyword id="KW-0007">Acetylation</keyword>
<keyword id="KW-0131">Cell cycle</keyword>
<keyword id="KW-0132">Cell division</keyword>
<keyword id="KW-0137">Centromere</keyword>
<keyword id="KW-0158">Chromosome</keyword>
<keyword id="KW-0963">Cytoplasm</keyword>
<keyword id="KW-0995">Kinetochore</keyword>
<keyword id="KW-0498">Mitosis</keyword>
<keyword id="KW-0539">Nucleus</keyword>
<keyword id="KW-1185">Reference proteome</keyword>
<keyword id="KW-0833">Ubl conjugation pathway</keyword>
<protein>
    <recommendedName>
        <fullName>Anaphase-promoting complex subunit 16</fullName>
        <shortName>APC16</shortName>
    </recommendedName>
    <alternativeName>
        <fullName>Cyclosome subunit 16</fullName>
    </alternativeName>
</protein>
<gene>
    <name type="primary">ANAPC16</name>
</gene>
<reference key="1">
    <citation type="journal article" date="2005" name="BMC Genomics">
        <title>Characterization of 954 bovine full-CDS cDNA sequences.</title>
        <authorList>
            <person name="Harhay G.P."/>
            <person name="Sonstegard T.S."/>
            <person name="Keele J.W."/>
            <person name="Heaton M.P."/>
            <person name="Clawson M.L."/>
            <person name="Snelling W.M."/>
            <person name="Wiedmann R.T."/>
            <person name="Van Tassell C.P."/>
            <person name="Smith T.P.L."/>
        </authorList>
    </citation>
    <scope>NUCLEOTIDE SEQUENCE [LARGE SCALE MRNA]</scope>
</reference>
<reference key="2">
    <citation type="submission" date="2006-04" db="EMBL/GenBank/DDBJ databases">
        <authorList>
            <consortium name="NIH - Mammalian Gene Collection (MGC) project"/>
        </authorList>
    </citation>
    <scope>NUCLEOTIDE SEQUENCE [LARGE SCALE MRNA]</scope>
    <source>
        <strain>Hereford</strain>
        <tissue>Ascending colon</tissue>
    </source>
</reference>
<organism>
    <name type="scientific">Bos taurus</name>
    <name type="common">Bovine</name>
    <dbReference type="NCBI Taxonomy" id="9913"/>
    <lineage>
        <taxon>Eukaryota</taxon>
        <taxon>Metazoa</taxon>
        <taxon>Chordata</taxon>
        <taxon>Craniata</taxon>
        <taxon>Vertebrata</taxon>
        <taxon>Euteleostomi</taxon>
        <taxon>Mammalia</taxon>
        <taxon>Eutheria</taxon>
        <taxon>Laurasiatheria</taxon>
        <taxon>Artiodactyla</taxon>
        <taxon>Ruminantia</taxon>
        <taxon>Pecora</taxon>
        <taxon>Bovidae</taxon>
        <taxon>Bovinae</taxon>
        <taxon>Bos</taxon>
    </lineage>
</organism>
<name>APC16_BOVIN</name>
<accession>Q58DR0</accession>
<accession>Q1RMH7</accession>